<accession>Q32RL1</accession>
<evidence type="ECO:0000255" key="1">
    <source>
        <dbReference type="HAMAP-Rule" id="MF_01346"/>
    </source>
</evidence>
<comment type="function">
    <text evidence="1">Produces ATP from ADP in the presence of a proton gradient across the membrane. The alpha chain is a regulatory subunit.</text>
</comment>
<comment type="catalytic activity">
    <reaction evidence="1">
        <text>ATP + H2O + 4 H(+)(in) = ADP + phosphate + 5 H(+)(out)</text>
        <dbReference type="Rhea" id="RHEA:57720"/>
        <dbReference type="ChEBI" id="CHEBI:15377"/>
        <dbReference type="ChEBI" id="CHEBI:15378"/>
        <dbReference type="ChEBI" id="CHEBI:30616"/>
        <dbReference type="ChEBI" id="CHEBI:43474"/>
        <dbReference type="ChEBI" id="CHEBI:456216"/>
        <dbReference type="EC" id="7.1.2.2"/>
    </reaction>
</comment>
<comment type="subunit">
    <text evidence="1">F-type ATPases have 2 components, CF(1) - the catalytic core - and CF(0) - the membrane proton channel. CF(1) has five subunits: alpha(3), beta(3), gamma(1), delta(1), epsilon(1). CF(0) has four main subunits: a, b, b' and c.</text>
</comment>
<comment type="subcellular location">
    <subcellularLocation>
        <location evidence="1">Plastid</location>
        <location evidence="1">Chloroplast thylakoid membrane</location>
        <topology evidence="1">Peripheral membrane protein</topology>
    </subcellularLocation>
</comment>
<comment type="similarity">
    <text evidence="1">Belongs to the ATPase alpha/beta chains family.</text>
</comment>
<name>ATPA_ZYGCR</name>
<protein>
    <recommendedName>
        <fullName evidence="1">ATP synthase subunit alpha, chloroplastic</fullName>
        <ecNumber evidence="1">7.1.2.2</ecNumber>
    </recommendedName>
    <alternativeName>
        <fullName evidence="1">ATP synthase F1 sector subunit alpha</fullName>
    </alternativeName>
    <alternativeName>
        <fullName evidence="1">F-ATPase subunit alpha</fullName>
    </alternativeName>
</protein>
<reference key="1">
    <citation type="journal article" date="2005" name="BMC Biol.">
        <title>The complete chloroplast DNA sequences of the charophycean green algae Staurastrum and Zygnema reveal that the chloroplast genome underwent extensive changes during the evolution of the Zygnematales.</title>
        <authorList>
            <person name="Turmel M."/>
            <person name="Otis C."/>
            <person name="Lemieux C."/>
        </authorList>
    </citation>
    <scope>NUCLEOTIDE SEQUENCE [LARGE SCALE GENOMIC DNA]</scope>
</reference>
<organism>
    <name type="scientific">Zygnema circumcarinatum</name>
    <name type="common">Green alga</name>
    <dbReference type="NCBI Taxonomy" id="35869"/>
    <lineage>
        <taxon>Eukaryota</taxon>
        <taxon>Viridiplantae</taxon>
        <taxon>Streptophyta</taxon>
        <taxon>Zygnematophyceae</taxon>
        <taxon>Zygnematophycidae</taxon>
        <taxon>Zygnematales</taxon>
        <taxon>Zygnemataceae</taxon>
        <taxon>Zygnema</taxon>
    </lineage>
</organism>
<geneLocation type="chloroplast"/>
<proteinExistence type="inferred from homology"/>
<dbReference type="EC" id="7.1.2.2" evidence="1"/>
<dbReference type="EMBL" id="AY958086">
    <property type="protein sequence ID" value="AAX45795.1"/>
    <property type="molecule type" value="Genomic_DNA"/>
</dbReference>
<dbReference type="RefSeq" id="YP_636515.1">
    <property type="nucleotide sequence ID" value="NC_008117.1"/>
</dbReference>
<dbReference type="SMR" id="Q32RL1"/>
<dbReference type="GeneID" id="4108255"/>
<dbReference type="GO" id="GO:0009535">
    <property type="term" value="C:chloroplast thylakoid membrane"/>
    <property type="evidence" value="ECO:0007669"/>
    <property type="project" value="UniProtKB-SubCell"/>
</dbReference>
<dbReference type="GO" id="GO:0045259">
    <property type="term" value="C:proton-transporting ATP synthase complex"/>
    <property type="evidence" value="ECO:0007669"/>
    <property type="project" value="UniProtKB-KW"/>
</dbReference>
<dbReference type="GO" id="GO:0043531">
    <property type="term" value="F:ADP binding"/>
    <property type="evidence" value="ECO:0007669"/>
    <property type="project" value="TreeGrafter"/>
</dbReference>
<dbReference type="GO" id="GO:0005524">
    <property type="term" value="F:ATP binding"/>
    <property type="evidence" value="ECO:0007669"/>
    <property type="project" value="UniProtKB-UniRule"/>
</dbReference>
<dbReference type="GO" id="GO:0046933">
    <property type="term" value="F:proton-transporting ATP synthase activity, rotational mechanism"/>
    <property type="evidence" value="ECO:0007669"/>
    <property type="project" value="UniProtKB-UniRule"/>
</dbReference>
<dbReference type="CDD" id="cd18113">
    <property type="entry name" value="ATP-synt_F1_alpha_C"/>
    <property type="match status" value="1"/>
</dbReference>
<dbReference type="CDD" id="cd18116">
    <property type="entry name" value="ATP-synt_F1_alpha_N"/>
    <property type="match status" value="1"/>
</dbReference>
<dbReference type="CDD" id="cd01132">
    <property type="entry name" value="F1-ATPase_alpha_CD"/>
    <property type="match status" value="1"/>
</dbReference>
<dbReference type="FunFam" id="1.20.150.20:FF:000001">
    <property type="entry name" value="ATP synthase subunit alpha"/>
    <property type="match status" value="1"/>
</dbReference>
<dbReference type="FunFam" id="2.40.30.20:FF:000001">
    <property type="entry name" value="ATP synthase subunit alpha"/>
    <property type="match status" value="1"/>
</dbReference>
<dbReference type="FunFam" id="3.40.50.300:FF:000002">
    <property type="entry name" value="ATP synthase subunit alpha"/>
    <property type="match status" value="1"/>
</dbReference>
<dbReference type="Gene3D" id="2.40.30.20">
    <property type="match status" value="1"/>
</dbReference>
<dbReference type="Gene3D" id="1.20.150.20">
    <property type="entry name" value="ATP synthase alpha/beta chain, C-terminal domain"/>
    <property type="match status" value="1"/>
</dbReference>
<dbReference type="Gene3D" id="3.40.50.300">
    <property type="entry name" value="P-loop containing nucleotide triphosphate hydrolases"/>
    <property type="match status" value="1"/>
</dbReference>
<dbReference type="HAMAP" id="MF_01346">
    <property type="entry name" value="ATP_synth_alpha_bact"/>
    <property type="match status" value="1"/>
</dbReference>
<dbReference type="InterPro" id="IPR023366">
    <property type="entry name" value="ATP_synth_asu-like_sf"/>
</dbReference>
<dbReference type="InterPro" id="IPR000793">
    <property type="entry name" value="ATP_synth_asu_C"/>
</dbReference>
<dbReference type="InterPro" id="IPR038376">
    <property type="entry name" value="ATP_synth_asu_C_sf"/>
</dbReference>
<dbReference type="InterPro" id="IPR033732">
    <property type="entry name" value="ATP_synth_F1_a_nt-bd_dom"/>
</dbReference>
<dbReference type="InterPro" id="IPR005294">
    <property type="entry name" value="ATP_synth_F1_asu"/>
</dbReference>
<dbReference type="InterPro" id="IPR020003">
    <property type="entry name" value="ATPase_a/bsu_AS"/>
</dbReference>
<dbReference type="InterPro" id="IPR004100">
    <property type="entry name" value="ATPase_F1/V1/A1_a/bsu_N"/>
</dbReference>
<dbReference type="InterPro" id="IPR036121">
    <property type="entry name" value="ATPase_F1/V1/A1_a/bsu_N_sf"/>
</dbReference>
<dbReference type="InterPro" id="IPR000194">
    <property type="entry name" value="ATPase_F1/V1/A1_a/bsu_nucl-bd"/>
</dbReference>
<dbReference type="InterPro" id="IPR027417">
    <property type="entry name" value="P-loop_NTPase"/>
</dbReference>
<dbReference type="NCBIfam" id="TIGR00962">
    <property type="entry name" value="atpA"/>
    <property type="match status" value="1"/>
</dbReference>
<dbReference type="NCBIfam" id="NF009884">
    <property type="entry name" value="PRK13343.1"/>
    <property type="match status" value="1"/>
</dbReference>
<dbReference type="PANTHER" id="PTHR48082">
    <property type="entry name" value="ATP SYNTHASE SUBUNIT ALPHA, MITOCHONDRIAL"/>
    <property type="match status" value="1"/>
</dbReference>
<dbReference type="PANTHER" id="PTHR48082:SF2">
    <property type="entry name" value="ATP SYNTHASE SUBUNIT ALPHA, MITOCHONDRIAL"/>
    <property type="match status" value="1"/>
</dbReference>
<dbReference type="Pfam" id="PF00006">
    <property type="entry name" value="ATP-synt_ab"/>
    <property type="match status" value="1"/>
</dbReference>
<dbReference type="Pfam" id="PF00306">
    <property type="entry name" value="ATP-synt_ab_C"/>
    <property type="match status" value="1"/>
</dbReference>
<dbReference type="Pfam" id="PF02874">
    <property type="entry name" value="ATP-synt_ab_N"/>
    <property type="match status" value="1"/>
</dbReference>
<dbReference type="PIRSF" id="PIRSF039088">
    <property type="entry name" value="F_ATPase_subunit_alpha"/>
    <property type="match status" value="1"/>
</dbReference>
<dbReference type="SUPFAM" id="SSF47917">
    <property type="entry name" value="C-terminal domain of alpha and beta subunits of F1 ATP synthase"/>
    <property type="match status" value="1"/>
</dbReference>
<dbReference type="SUPFAM" id="SSF50615">
    <property type="entry name" value="N-terminal domain of alpha and beta subunits of F1 ATP synthase"/>
    <property type="match status" value="1"/>
</dbReference>
<dbReference type="SUPFAM" id="SSF52540">
    <property type="entry name" value="P-loop containing nucleoside triphosphate hydrolases"/>
    <property type="match status" value="1"/>
</dbReference>
<dbReference type="PROSITE" id="PS00152">
    <property type="entry name" value="ATPASE_ALPHA_BETA"/>
    <property type="match status" value="1"/>
</dbReference>
<gene>
    <name evidence="1" type="primary">atpA</name>
</gene>
<sequence length="505" mass="54792">MVNIRPDEISSIIRKQIEQYTQEVKVVNIGTVLQVGDGIARIYGLDKVMAGELLEFEDGTIGIALNLESDNVGAVLMGDGLTIQEGSSVKATGKIAQIPVSDGYLGRVVNALARPIDGKGDIASSEFRLIESPAPGIISRRSVYEPMQTGLIAIDAMIPIGRGQRELIIGDRQTGKTAVATDTILNQKGQNVICVYVAIGQKASSVAQVVNTFEERGAMDYTIVVAETANAPATLQYLAPYTGAALAEYFMYKGQHTLVVYDDLSKQAQAYRQMSLLLRRPPGREAYPGDVFYLHSRLLERAAKLGSQLGEGSMTALPIVETQAGDVSAYIPTNVISITDGQIFLSADLFNSGIRPAINVGISVSRVGSAAQIKAMKQVAGKLKLELAQFAELEAFSQFASDLDKATQNQLARGQRLRELLKQAQSAPLSVEQQVATIFTGVNGYLDVIEVSQVRSFLTQLREYIITNKPQFGEIIRSTKTFTDEAQTILKQAIQEHTEAFLLQQ</sequence>
<feature type="chain" id="PRO_0000238445" description="ATP synthase subunit alpha, chloroplastic">
    <location>
        <begin position="1"/>
        <end position="505"/>
    </location>
</feature>
<feature type="binding site" evidence="1">
    <location>
        <begin position="170"/>
        <end position="177"/>
    </location>
    <ligand>
        <name>ATP</name>
        <dbReference type="ChEBI" id="CHEBI:30616"/>
    </ligand>
</feature>
<feature type="site" description="Required for activity" evidence="1">
    <location>
        <position position="363"/>
    </location>
</feature>
<keyword id="KW-0066">ATP synthesis</keyword>
<keyword id="KW-0067">ATP-binding</keyword>
<keyword id="KW-0139">CF(1)</keyword>
<keyword id="KW-0150">Chloroplast</keyword>
<keyword id="KW-0375">Hydrogen ion transport</keyword>
<keyword id="KW-0406">Ion transport</keyword>
<keyword id="KW-0472">Membrane</keyword>
<keyword id="KW-0547">Nucleotide-binding</keyword>
<keyword id="KW-0934">Plastid</keyword>
<keyword id="KW-0793">Thylakoid</keyword>
<keyword id="KW-1278">Translocase</keyword>
<keyword id="KW-0813">Transport</keyword>